<reference key="1">
    <citation type="journal article" date="2001" name="Nature">
        <title>Complete genome sequence of Salmonella enterica serovar Typhimurium LT2.</title>
        <authorList>
            <person name="McClelland M."/>
            <person name="Sanderson K.E."/>
            <person name="Spieth J."/>
            <person name="Clifton S.W."/>
            <person name="Latreille P."/>
            <person name="Courtney L."/>
            <person name="Porwollik S."/>
            <person name="Ali J."/>
            <person name="Dante M."/>
            <person name="Du F."/>
            <person name="Hou S."/>
            <person name="Layman D."/>
            <person name="Leonard S."/>
            <person name="Nguyen C."/>
            <person name="Scott K."/>
            <person name="Holmes A."/>
            <person name="Grewal N."/>
            <person name="Mulvaney E."/>
            <person name="Ryan E."/>
            <person name="Sun H."/>
            <person name="Florea L."/>
            <person name="Miller W."/>
            <person name="Stoneking T."/>
            <person name="Nhan M."/>
            <person name="Waterston R."/>
            <person name="Wilson R.K."/>
        </authorList>
    </citation>
    <scope>NUCLEOTIDE SEQUENCE [LARGE SCALE GENOMIC DNA]</scope>
    <source>
        <strain>LT2 / SGSC1412 / ATCC 700720</strain>
    </source>
</reference>
<proteinExistence type="inferred from homology"/>
<protein>
    <recommendedName>
        <fullName evidence="1">Large ribosomal subunit protein uL13</fullName>
    </recommendedName>
    <alternativeName>
        <fullName evidence="2">50S ribosomal protein L13</fullName>
    </alternativeName>
</protein>
<accession>P0AA13</accession>
<accession>P02410</accession>
<gene>
    <name evidence="1" type="primary">rplM</name>
    <name type="ordered locus">STM3345</name>
</gene>
<evidence type="ECO:0000255" key="1">
    <source>
        <dbReference type="HAMAP-Rule" id="MF_01366"/>
    </source>
</evidence>
<evidence type="ECO:0000305" key="2"/>
<keyword id="KW-1185">Reference proteome</keyword>
<keyword id="KW-0687">Ribonucleoprotein</keyword>
<keyword id="KW-0689">Ribosomal protein</keyword>
<sequence>MKTFTAKPETVKRDWYVVDATGKTLGRLATELARRLRGKHKAEYTPHVDTGDYIIVLNADKVAVTGNKRTDKVYYHHTGHIGGIKQATFEEMIARRPERVIEIAVKGMLPKGPLGRAMFRKLKVYAGNEHNHAAQQPQVLDI</sequence>
<name>RL13_SALTY</name>
<organism>
    <name type="scientific">Salmonella typhimurium (strain LT2 / SGSC1412 / ATCC 700720)</name>
    <dbReference type="NCBI Taxonomy" id="99287"/>
    <lineage>
        <taxon>Bacteria</taxon>
        <taxon>Pseudomonadati</taxon>
        <taxon>Pseudomonadota</taxon>
        <taxon>Gammaproteobacteria</taxon>
        <taxon>Enterobacterales</taxon>
        <taxon>Enterobacteriaceae</taxon>
        <taxon>Salmonella</taxon>
    </lineage>
</organism>
<feature type="chain" id="PRO_0000133748" description="Large ribosomal subunit protein uL13">
    <location>
        <begin position="1"/>
        <end position="142"/>
    </location>
</feature>
<comment type="function">
    <text evidence="1">This protein is one of the early assembly proteins of the 50S ribosomal subunit, although it is not seen to bind rRNA by itself. It is important during the early stages of 50S assembly.</text>
</comment>
<comment type="subunit">
    <text evidence="1">Part of the 50S ribosomal subunit.</text>
</comment>
<comment type="similarity">
    <text evidence="1">Belongs to the universal ribosomal protein uL13 family.</text>
</comment>
<dbReference type="EMBL" id="AE006468">
    <property type="protein sequence ID" value="AAL22214.1"/>
    <property type="molecule type" value="Genomic_DNA"/>
</dbReference>
<dbReference type="RefSeq" id="NP_462255.1">
    <property type="nucleotide sequence ID" value="NC_003197.2"/>
</dbReference>
<dbReference type="RefSeq" id="WP_000847559.1">
    <property type="nucleotide sequence ID" value="NC_003197.2"/>
</dbReference>
<dbReference type="SMR" id="P0AA13"/>
<dbReference type="STRING" id="99287.STM3345"/>
<dbReference type="PaxDb" id="99287-STM3345"/>
<dbReference type="GeneID" id="1254868"/>
<dbReference type="GeneID" id="89518067"/>
<dbReference type="KEGG" id="stm:STM3345"/>
<dbReference type="PATRIC" id="fig|99287.12.peg.3546"/>
<dbReference type="HOGENOM" id="CLU_082184_2_2_6"/>
<dbReference type="OMA" id="HKPIYTP"/>
<dbReference type="PhylomeDB" id="P0AA13"/>
<dbReference type="BioCyc" id="SENT99287:STM3345-MONOMER"/>
<dbReference type="Proteomes" id="UP000001014">
    <property type="component" value="Chromosome"/>
</dbReference>
<dbReference type="GO" id="GO:0022625">
    <property type="term" value="C:cytosolic large ribosomal subunit"/>
    <property type="evidence" value="ECO:0000318"/>
    <property type="project" value="GO_Central"/>
</dbReference>
<dbReference type="GO" id="GO:0005840">
    <property type="term" value="C:ribosome"/>
    <property type="evidence" value="ECO:0000318"/>
    <property type="project" value="GO_Central"/>
</dbReference>
<dbReference type="GO" id="GO:0003729">
    <property type="term" value="F:mRNA binding"/>
    <property type="evidence" value="ECO:0000318"/>
    <property type="project" value="GO_Central"/>
</dbReference>
<dbReference type="GO" id="GO:0003735">
    <property type="term" value="F:structural constituent of ribosome"/>
    <property type="evidence" value="ECO:0000318"/>
    <property type="project" value="GO_Central"/>
</dbReference>
<dbReference type="GO" id="GO:0017148">
    <property type="term" value="P:negative regulation of translation"/>
    <property type="evidence" value="ECO:0000318"/>
    <property type="project" value="GO_Central"/>
</dbReference>
<dbReference type="GO" id="GO:0006412">
    <property type="term" value="P:translation"/>
    <property type="evidence" value="ECO:0007669"/>
    <property type="project" value="UniProtKB-UniRule"/>
</dbReference>
<dbReference type="CDD" id="cd00392">
    <property type="entry name" value="Ribosomal_L13"/>
    <property type="match status" value="1"/>
</dbReference>
<dbReference type="FunFam" id="3.90.1180.10:FF:000001">
    <property type="entry name" value="50S ribosomal protein L13"/>
    <property type="match status" value="1"/>
</dbReference>
<dbReference type="Gene3D" id="3.90.1180.10">
    <property type="entry name" value="Ribosomal protein L13"/>
    <property type="match status" value="1"/>
</dbReference>
<dbReference type="HAMAP" id="MF_01366">
    <property type="entry name" value="Ribosomal_uL13"/>
    <property type="match status" value="1"/>
</dbReference>
<dbReference type="InterPro" id="IPR005822">
    <property type="entry name" value="Ribosomal_uL13"/>
</dbReference>
<dbReference type="InterPro" id="IPR005823">
    <property type="entry name" value="Ribosomal_uL13_bac-type"/>
</dbReference>
<dbReference type="InterPro" id="IPR023563">
    <property type="entry name" value="Ribosomal_uL13_CS"/>
</dbReference>
<dbReference type="InterPro" id="IPR036899">
    <property type="entry name" value="Ribosomal_uL13_sf"/>
</dbReference>
<dbReference type="NCBIfam" id="TIGR01066">
    <property type="entry name" value="rplM_bact"/>
    <property type="match status" value="1"/>
</dbReference>
<dbReference type="PANTHER" id="PTHR11545:SF2">
    <property type="entry name" value="LARGE RIBOSOMAL SUBUNIT PROTEIN UL13M"/>
    <property type="match status" value="1"/>
</dbReference>
<dbReference type="PANTHER" id="PTHR11545">
    <property type="entry name" value="RIBOSOMAL PROTEIN L13"/>
    <property type="match status" value="1"/>
</dbReference>
<dbReference type="Pfam" id="PF00572">
    <property type="entry name" value="Ribosomal_L13"/>
    <property type="match status" value="1"/>
</dbReference>
<dbReference type="PIRSF" id="PIRSF002181">
    <property type="entry name" value="Ribosomal_L13"/>
    <property type="match status" value="1"/>
</dbReference>
<dbReference type="SUPFAM" id="SSF52161">
    <property type="entry name" value="Ribosomal protein L13"/>
    <property type="match status" value="1"/>
</dbReference>
<dbReference type="PROSITE" id="PS00783">
    <property type="entry name" value="RIBOSOMAL_L13"/>
    <property type="match status" value="1"/>
</dbReference>